<name>CAPSD_BPAL3</name>
<protein>
    <recommendedName>
        <fullName>Capsid protein F</fullName>
    </recommendedName>
    <alternativeName>
        <fullName>F protein</fullName>
    </alternativeName>
    <alternativeName>
        <fullName>GPF</fullName>
    </alternativeName>
</protein>
<comment type="function">
    <text evidence="1">Assembles to form an icosahedral capsid with a T=1 symmetry, about 30 nm in diameter, and consisting of 60 capsid proteins F. Upon virus binding to host cell, one of the spikes dissociates from the capsid and the virus interacts with LPS through the exposed EF loops on the F proteins. After the genome had been ejected, the channel formed by the F proteins at the unique fivefold axis remains open.</text>
</comment>
<comment type="subunit">
    <text evidence="1">Pentamerizes and interacts with H protein, G and B pentamers to form 12S pre-assembly complex. By binding with protein D, induces joining of twelve 12S complex to form the procapsid. The procapsid has an external scaffold made of 240 copies of protein D, 60 copies of the internally located B protein, and contains 60 copies of each of the viral structural proteins F and G. Upon genome packaging, interacts with protein J. The mature virion is composed of 60 copies each of the F, G, and J proteins, and 12 copies of the H protein.</text>
</comment>
<comment type="subcellular location">
    <subcellularLocation>
        <location evidence="1">Virion</location>
    </subcellularLocation>
</comment>
<comment type="similarity">
    <text evidence="2">Belongs to the microviridae F protein family.</text>
</comment>
<comment type="online information" name="Virus Particle ExploreR db">
    <link uri="https://viperdb.org/Info_Page.php?VDB=1rb8"/>
    <text>Icosahedral capsid structure</text>
</comment>
<reference key="1">
    <citation type="journal article" date="1992" name="Biochim. Biophys. Acta">
        <title>Nucleotide sequence of the genome of the bacteriophage alpha 3: interrelationship of the genome structure and the gene products with those of the phages, phi X174, G4 and phi K.</title>
        <authorList>
            <person name="Kodaira K."/>
            <person name="Nakano K."/>
            <person name="Okada S."/>
            <person name="Taketo A."/>
        </authorList>
    </citation>
    <scope>NUCLEOTIDE SEQUENCE [GENOMIC DNA]</scope>
</reference>
<reference key="2">
    <citation type="journal article" date="1984" name="Mol. Gen. Genet.">
        <title>Isolation and some properties of bacteriophage alpha3 gene J mutant.</title>
        <authorList>
            <person name="Kodaira K."/>
            <person name="Taketo A."/>
        </authorList>
    </citation>
    <scope>NUCLEOTIDE SEQUENCE [GENOMIC DNA] OF 1-13</scope>
</reference>
<reference evidence="3 4" key="3">
    <citation type="journal article" date="2003" name="J. Mol. Biol.">
        <title>Structural studies of bacteriophage alpha3 assembly.</title>
        <authorList>
            <person name="Bernal R.A."/>
            <person name="Hafenstein S."/>
            <person name="Olson N.H."/>
            <person name="Bowman V.D."/>
            <person name="Chipman P.R."/>
            <person name="Baker T.S."/>
            <person name="Fane B.A."/>
            <person name="Rossmann M.G."/>
        </authorList>
    </citation>
    <scope>X-RAY CRYSTALLOGRAPHY (3.50 ANGSTROMS)</scope>
</reference>
<keyword id="KW-0002">3D-structure</keyword>
<keyword id="KW-0167">Capsid protein</keyword>
<keyword id="KW-1185">Reference proteome</keyword>
<keyword id="KW-1140">T=1 icosahedral capsid protein</keyword>
<keyword id="KW-1171">Viral genome ejection through host cell envelope</keyword>
<keyword id="KW-1162">Viral penetration into host cytoplasm</keyword>
<keyword id="KW-0946">Virion</keyword>
<keyword id="KW-1160">Virus entry into host cell</keyword>
<sequence length="431" mass="49337">MSNVQTSAEREIVDLSHLAFDCGMLGRLKTVSWTPVIAGDSFELDAVGALRLSPLRRGLAIDSKVDFFTFYIPHRHVYGDQWIQFMRDGVNAQPLPSVTCNRYPDHAGYVGTIVPANNRIPKFLHQSYLNIYNNYFRAPWMPERTEANPSNLNEDDARYRFRCCHLKNIWSAPLPPETKLAEEMGIESNSIDIMGLQAAYAQLHTEQERTYFMQRYRDVISSFGGSTSYDADNRPLLVMHTDFWASGYDVDGTDQSSLGQFSGRVQQTFKHSVPRFFVPEHGVMMTLALIRFPPISPLEHHYLAGKSQLTYTDLAGDPALIGNLPPREISYRDLFRDGRSGIKIKVAESIWYRTHPDYVNFKYHDLHGFPFLDDAPGTSTGDNLQEAILVRHQDYDACFQSQQLLQWNKQARYNVSVYRHMPTVRDSIMTS</sequence>
<organismHost>
    <name type="scientific">Escherichia coli</name>
    <dbReference type="NCBI Taxonomy" id="562"/>
</organismHost>
<proteinExistence type="evidence at protein level"/>
<gene>
    <name type="primary">F</name>
</gene>
<accession>P08767</accession>
<organism>
    <name type="scientific">Escherichia phage alpha3</name>
    <name type="common">Bacteriophage alpha-3</name>
    <dbReference type="NCBI Taxonomy" id="10849"/>
    <lineage>
        <taxon>Viruses</taxon>
        <taxon>Monodnaviria</taxon>
        <taxon>Sangervirae</taxon>
        <taxon>Phixviricota</taxon>
        <taxon>Malgrandaviricetes</taxon>
        <taxon>Petitvirales</taxon>
        <taxon>Microviridae</taxon>
        <taxon>Bullavirinae</taxon>
        <taxon>Alphatrevirus</taxon>
        <taxon>Alphatrevirus alpha3</taxon>
    </lineage>
</organism>
<dbReference type="EMBL" id="X60322">
    <property type="protein sequence ID" value="CAA42881.1"/>
    <property type="molecule type" value="Genomic_DNA"/>
</dbReference>
<dbReference type="EMBL" id="X00774">
    <property type="protein sequence ID" value="CAA25350.1"/>
    <property type="molecule type" value="Genomic_DNA"/>
</dbReference>
<dbReference type="PIR" id="S22330">
    <property type="entry name" value="S22330"/>
</dbReference>
<dbReference type="RefSeq" id="NP_039597.1">
    <property type="nucleotide sequence ID" value="NC_001330.1"/>
</dbReference>
<dbReference type="PDB" id="1M06">
    <property type="method" value="X-ray"/>
    <property type="resolution" value="3.50 A"/>
    <property type="chains" value="F=1-431"/>
</dbReference>
<dbReference type="PDB" id="1M0F">
    <property type="method" value="EM"/>
    <property type="resolution" value="16.00 A"/>
    <property type="chains" value="F=1-431"/>
</dbReference>
<dbReference type="PDB" id="1RB8">
    <property type="method" value="X-ray"/>
    <property type="resolution" value="3.50 A"/>
    <property type="chains" value="F=1-431"/>
</dbReference>
<dbReference type="PDBsum" id="1M06"/>
<dbReference type="PDBsum" id="1M0F"/>
<dbReference type="PDBsum" id="1RB8"/>
<dbReference type="SMR" id="P08767"/>
<dbReference type="GeneID" id="1260697"/>
<dbReference type="KEGG" id="vg:1260697"/>
<dbReference type="OrthoDB" id="4027at10239"/>
<dbReference type="EvolutionaryTrace" id="P08767"/>
<dbReference type="Proteomes" id="UP000002137">
    <property type="component" value="Genome"/>
</dbReference>
<dbReference type="GO" id="GO:0039615">
    <property type="term" value="C:T=1 icosahedral viral capsid"/>
    <property type="evidence" value="ECO:0007669"/>
    <property type="project" value="UniProtKB-KW"/>
</dbReference>
<dbReference type="GO" id="GO:0005198">
    <property type="term" value="F:structural molecule activity"/>
    <property type="evidence" value="ECO:0007669"/>
    <property type="project" value="InterPro"/>
</dbReference>
<dbReference type="GO" id="GO:0046718">
    <property type="term" value="P:symbiont entry into host cell"/>
    <property type="evidence" value="ECO:0007669"/>
    <property type="project" value="UniProtKB-KW"/>
</dbReference>
<dbReference type="Gene3D" id="2.60.169.10">
    <property type="entry name" value="Microviridae F protein"/>
    <property type="match status" value="1"/>
</dbReference>
<dbReference type="InterPro" id="IPR016184">
    <property type="entry name" value="Capsid/spike_ssDNA_virus"/>
</dbReference>
<dbReference type="InterPro" id="IPR003514">
    <property type="entry name" value="Microviridae_protein_F"/>
</dbReference>
<dbReference type="InterPro" id="IPR037002">
    <property type="entry name" value="Microviridae_protein_F_sf"/>
</dbReference>
<dbReference type="Pfam" id="PF02305">
    <property type="entry name" value="Phage_F"/>
    <property type="match status" value="2"/>
</dbReference>
<dbReference type="SUPFAM" id="SSF88645">
    <property type="entry name" value="ssDNA viruses"/>
    <property type="match status" value="1"/>
</dbReference>
<evidence type="ECO:0000250" key="1">
    <source>
        <dbReference type="UniProtKB" id="P03641"/>
    </source>
</evidence>
<evidence type="ECO:0000305" key="2"/>
<evidence type="ECO:0007744" key="3">
    <source>
        <dbReference type="PDB" id="1M06"/>
    </source>
</evidence>
<evidence type="ECO:0007744" key="4">
    <source>
        <dbReference type="PDB" id="1M0F"/>
    </source>
</evidence>
<evidence type="ECO:0007829" key="5">
    <source>
        <dbReference type="PDB" id="1M06"/>
    </source>
</evidence>
<feature type="initiator methionine" description="Removed; by host" evidence="1">
    <location>
        <position position="1"/>
    </location>
</feature>
<feature type="chain" id="PRO_0000164887" description="Capsid protein F">
    <location>
        <begin position="2"/>
        <end position="431"/>
    </location>
</feature>
<feature type="strand" evidence="5">
    <location>
        <begin position="11"/>
        <end position="14"/>
    </location>
</feature>
<feature type="strand" evidence="5">
    <location>
        <begin position="17"/>
        <end position="23"/>
    </location>
</feature>
<feature type="strand" evidence="5">
    <location>
        <begin position="25"/>
        <end position="36"/>
    </location>
</feature>
<feature type="strand" evidence="5">
    <location>
        <begin position="41"/>
        <end position="52"/>
    </location>
</feature>
<feature type="strand" evidence="5">
    <location>
        <begin position="55"/>
        <end position="58"/>
    </location>
</feature>
<feature type="strand" evidence="5">
    <location>
        <begin position="63"/>
        <end position="73"/>
    </location>
</feature>
<feature type="helix" evidence="5">
    <location>
        <begin position="74"/>
        <end position="78"/>
    </location>
</feature>
<feature type="helix" evidence="5">
    <location>
        <begin position="80"/>
        <end position="88"/>
    </location>
</feature>
<feature type="helix" evidence="5">
    <location>
        <begin position="89"/>
        <end position="91"/>
    </location>
</feature>
<feature type="strand" evidence="5">
    <location>
        <begin position="97"/>
        <end position="99"/>
    </location>
</feature>
<feature type="turn" evidence="5">
    <location>
        <begin position="104"/>
        <end position="107"/>
    </location>
</feature>
<feature type="helix" evidence="5">
    <location>
        <begin position="108"/>
        <end position="110"/>
    </location>
</feature>
<feature type="strand" evidence="5">
    <location>
        <begin position="118"/>
        <end position="121"/>
    </location>
</feature>
<feature type="helix" evidence="5">
    <location>
        <begin position="122"/>
        <end position="135"/>
    </location>
</feature>
<feature type="helix" evidence="5">
    <location>
        <begin position="149"/>
        <end position="151"/>
    </location>
</feature>
<feature type="helix" evidence="5">
    <location>
        <begin position="154"/>
        <end position="159"/>
    </location>
</feature>
<feature type="turn" evidence="5">
    <location>
        <begin position="169"/>
        <end position="171"/>
    </location>
</feature>
<feature type="helix" evidence="5">
    <location>
        <begin position="193"/>
        <end position="212"/>
    </location>
</feature>
<feature type="helix" evidence="5">
    <location>
        <begin position="216"/>
        <end position="222"/>
    </location>
</feature>
<feature type="turn" evidence="5">
    <location>
        <begin position="229"/>
        <end position="233"/>
    </location>
</feature>
<feature type="strand" evidence="5">
    <location>
        <begin position="236"/>
        <end position="245"/>
    </location>
</feature>
<feature type="strand" evidence="5">
    <location>
        <begin position="247"/>
        <end position="251"/>
    </location>
</feature>
<feature type="turn" evidence="5">
    <location>
        <begin position="255"/>
        <end position="259"/>
    </location>
</feature>
<feature type="strand" evidence="5">
    <location>
        <begin position="261"/>
        <end position="277"/>
    </location>
</feature>
<feature type="strand" evidence="5">
    <location>
        <begin position="280"/>
        <end position="291"/>
    </location>
</feature>
<feature type="helix" evidence="5">
    <location>
        <begin position="302"/>
        <end position="305"/>
    </location>
</feature>
<feature type="helix" evidence="5">
    <location>
        <begin position="311"/>
        <end position="314"/>
    </location>
</feature>
<feature type="helix" evidence="5">
    <location>
        <begin position="318"/>
        <end position="321"/>
    </location>
</feature>
<feature type="strand" evidence="5">
    <location>
        <begin position="327"/>
        <end position="330"/>
    </location>
</feature>
<feature type="helix" evidence="5">
    <location>
        <begin position="331"/>
        <end position="333"/>
    </location>
</feature>
<feature type="strand" evidence="5">
    <location>
        <begin position="343"/>
        <end position="346"/>
    </location>
</feature>
<feature type="helix" evidence="5">
    <location>
        <begin position="350"/>
        <end position="352"/>
    </location>
</feature>
<feature type="helix" evidence="5">
    <location>
        <begin position="361"/>
        <end position="365"/>
    </location>
</feature>
<feature type="turn" evidence="5">
    <location>
        <begin position="376"/>
        <end position="380"/>
    </location>
</feature>
<feature type="helix" evidence="5">
    <location>
        <begin position="384"/>
        <end position="388"/>
    </location>
</feature>
<feature type="helix" evidence="5">
    <location>
        <begin position="392"/>
        <end position="398"/>
    </location>
</feature>
<feature type="strand" evidence="5">
    <location>
        <begin position="406"/>
        <end position="419"/>
    </location>
</feature>
<feature type="helix" evidence="5">
    <location>
        <begin position="424"/>
        <end position="428"/>
    </location>
</feature>